<gene>
    <name evidence="5" type="primary">6-FEH</name>
</gene>
<protein>
    <recommendedName>
        <fullName evidence="5">Fructan 6-exohydrolase</fullName>
        <ecNumber>3.2.1.154</ecNumber>
    </recommendedName>
</protein>
<accession>Q2UXF7</accession>
<feature type="signal peptide" evidence="2">
    <location>
        <begin position="1"/>
        <end position="30"/>
    </location>
</feature>
<feature type="chain" id="PRO_0000395873" description="Fructan 6-exohydrolase" evidence="2">
    <location>
        <begin position="31"/>
        <end position="598"/>
    </location>
</feature>
<feature type="active site" evidence="1">
    <location>
        <position position="65"/>
    </location>
</feature>
<feature type="glycosylation site" description="N-linked (GlcNAc...) asparagine" evidence="2">
    <location>
        <position position="93"/>
    </location>
</feature>
<feature type="glycosylation site" description="N-linked (GlcNAc...) asparagine" evidence="2">
    <location>
        <position position="288"/>
    </location>
</feature>
<feature type="glycosylation site" description="N-linked (GlcNAc...) asparagine" evidence="2">
    <location>
        <position position="351"/>
    </location>
</feature>
<feature type="glycosylation site" description="N-linked (GlcNAc...) asparagine" evidence="2">
    <location>
        <position position="572"/>
    </location>
</feature>
<feature type="disulfide bond" evidence="1">
    <location>
        <begin position="451"/>
        <end position="497"/>
    </location>
</feature>
<proteinExistence type="evidence at protein level"/>
<organism>
    <name type="scientific">Triticum aestivum</name>
    <name type="common">Wheat</name>
    <dbReference type="NCBI Taxonomy" id="4565"/>
    <lineage>
        <taxon>Eukaryota</taxon>
        <taxon>Viridiplantae</taxon>
        <taxon>Streptophyta</taxon>
        <taxon>Embryophyta</taxon>
        <taxon>Tracheophyta</taxon>
        <taxon>Spermatophyta</taxon>
        <taxon>Magnoliopsida</taxon>
        <taxon>Liliopsida</taxon>
        <taxon>Poales</taxon>
        <taxon>Poaceae</taxon>
        <taxon>BOP clade</taxon>
        <taxon>Pooideae</taxon>
        <taxon>Triticodae</taxon>
        <taxon>Triticeae</taxon>
        <taxon>Triticinae</taxon>
        <taxon>Triticum</taxon>
    </lineage>
</organism>
<comment type="function">
    <text evidence="3">Hydrolyzes levan-type beta-(2-&gt;6)-linked fructans to fructose, but not inulin-type beta-(2-&gt;1)-linked fructans.</text>
</comment>
<comment type="catalytic activity">
    <reaction evidence="3">
        <text>Hydrolysis of terminal, non-reducing (2-&gt;6)-linked beta-D-fructofuranose residues in fructans.</text>
        <dbReference type="EC" id="3.2.1.154"/>
    </reaction>
</comment>
<comment type="activity regulation">
    <text evidence="3">Not inhibited by sucrose.</text>
</comment>
<comment type="tissue specificity">
    <text evidence="3">Expressed in leaves, stems, roots and inflorescences. Maximum expression is detected in stems, particularly the penultimate internode.</text>
</comment>
<comment type="similarity">
    <text evidence="2">Belongs to the glycosyl hydrolase 32 family.</text>
</comment>
<reference evidence="4 5" key="1">
    <citation type="journal article" date="2006" name="J. Exp. Bot.">
        <title>Purification, cloning and functional characterization of a fructan 6-exohydrolase from wheat (Triticum aestivum L.).</title>
        <authorList>
            <person name="Van Riet L."/>
            <person name="Nagaraj V."/>
            <person name="Van den Ende W."/>
            <person name="Clerens S."/>
            <person name="Wiemken A."/>
            <person name="Van Laere A."/>
        </authorList>
    </citation>
    <scope>NUCLEOTIDE SEQUENCE [MRNA]</scope>
    <scope>PROTEIN SEQUENCE OF 151-163; 299-314 AND 399-414</scope>
    <scope>FUNCTION</scope>
    <scope>CATALYTIC ACTIVITY</scope>
    <scope>ACTIVITY REGULATION</scope>
    <scope>TISSUE SPECIFICITY</scope>
    <source>
        <strain evidence="3">cv. Pajero</strain>
        <tissue evidence="5">Spike</tissue>
    </source>
</reference>
<evidence type="ECO:0000250" key="1">
    <source>
        <dbReference type="UniProtKB" id="Q43866"/>
    </source>
</evidence>
<evidence type="ECO:0000255" key="2"/>
<evidence type="ECO:0000269" key="3">
    <source>
    </source>
</evidence>
<evidence type="ECO:0000305" key="4"/>
<evidence type="ECO:0000312" key="5">
    <source>
        <dbReference type="EMBL" id="CAJ28591.1"/>
    </source>
</evidence>
<name>6FEH_WHEAT</name>
<sequence>MAARLPLAACVVAFHLCLLLSSLVRSPSTALRRLSEAESSLVRHGHGVGIRPAYHFLPAKNWQNDPNGPMYHNGVYHMFYQYNPLGAMWQPGNLSWGHSVSRDLVNWDALDTALDPTAPFDYNGCWSGSATILPGGIPALLYTGRIDADKEVQVQNVAFPKNPADPLLREWVKPAYNPVIPLPADVPGDNFRDPTTAWVGRDGLWRIAVAAKVGGPNGIASTLIYRSKDFRHWKRNASPLYTSRAAGMVECPDLFPVAEPGVEEGRLGYASGPASGAVRHVLKLSVMNTTQDYYAVGRYDDVADTFVPEVDVERNADDCRTWRRFDYGHVYASKSFFDSSKNRRVLWAWANESDSQDNDIARGWSGVQTVPRKVWLDEDGKQVRQWPIEEIETLRSKRVVGLLGAQVNAGGVNKITGVGAQADVEAIFEIPSLEEAETFQPNWLLDPQKLCEENGASVPGKVGPFGLLVMASSNMQEHTAIFFRVFRHNQKYKVLMCTDLTRSTGRDNVYKPSYGGFVDIDIEQQGRTISLRTLIDHSVVESFGGGGRTCITARVYPEHAENKNSHVFVFNNGTGLVKVSKLEAWRLAMASVNVVHGR</sequence>
<keyword id="KW-0903">Direct protein sequencing</keyword>
<keyword id="KW-1015">Disulfide bond</keyword>
<keyword id="KW-0325">Glycoprotein</keyword>
<keyword id="KW-0326">Glycosidase</keyword>
<keyword id="KW-0378">Hydrolase</keyword>
<keyword id="KW-1185">Reference proteome</keyword>
<keyword id="KW-0732">Signal</keyword>
<dbReference type="EC" id="3.2.1.154"/>
<dbReference type="EMBL" id="AM075205">
    <property type="protein sequence ID" value="CAJ28591.1"/>
    <property type="molecule type" value="mRNA"/>
</dbReference>
<dbReference type="SMR" id="Q2UXF7"/>
<dbReference type="STRING" id="4565.Q2UXF7"/>
<dbReference type="CAZy" id="GH32">
    <property type="family name" value="Glycoside Hydrolase Family 32"/>
</dbReference>
<dbReference type="GlyCosmos" id="Q2UXF7">
    <property type="glycosylation" value="4 sites, No reported glycans"/>
</dbReference>
<dbReference type="PaxDb" id="4565-Traes_2BL_16B7CE123.1"/>
<dbReference type="eggNOG" id="KOG0228">
    <property type="taxonomic scope" value="Eukaryota"/>
</dbReference>
<dbReference type="BRENDA" id="3.2.1.154">
    <property type="organism ID" value="6500"/>
</dbReference>
<dbReference type="Proteomes" id="UP000019116">
    <property type="component" value="Unplaced"/>
</dbReference>
<dbReference type="ExpressionAtlas" id="Q2UXF7">
    <property type="expression patterns" value="baseline"/>
</dbReference>
<dbReference type="GO" id="GO:0033949">
    <property type="term" value="F:fructan beta-(2,6)-fructosidase activity"/>
    <property type="evidence" value="ECO:0007669"/>
    <property type="project" value="UniProtKB-EC"/>
</dbReference>
<dbReference type="GO" id="GO:0005975">
    <property type="term" value="P:carbohydrate metabolic process"/>
    <property type="evidence" value="ECO:0007669"/>
    <property type="project" value="InterPro"/>
</dbReference>
<dbReference type="CDD" id="cd18624">
    <property type="entry name" value="GH32_Fruct1-like"/>
    <property type="match status" value="1"/>
</dbReference>
<dbReference type="FunFam" id="2.60.120.560:FF:000002">
    <property type="entry name" value="Beta-fructofuranosidase, insoluble isoenzyme CWINV1"/>
    <property type="match status" value="1"/>
</dbReference>
<dbReference type="Gene3D" id="2.60.120.560">
    <property type="entry name" value="Exo-inulinase, domain 1"/>
    <property type="match status" value="1"/>
</dbReference>
<dbReference type="Gene3D" id="2.115.10.20">
    <property type="entry name" value="Glycosyl hydrolase domain, family 43"/>
    <property type="match status" value="1"/>
</dbReference>
<dbReference type="InterPro" id="IPR013320">
    <property type="entry name" value="ConA-like_dom_sf"/>
</dbReference>
<dbReference type="InterPro" id="IPR050551">
    <property type="entry name" value="Fructan_Metab_Enzymes"/>
</dbReference>
<dbReference type="InterPro" id="IPR001362">
    <property type="entry name" value="Glyco_hydro_32"/>
</dbReference>
<dbReference type="InterPro" id="IPR013189">
    <property type="entry name" value="Glyco_hydro_32_C"/>
</dbReference>
<dbReference type="InterPro" id="IPR013148">
    <property type="entry name" value="Glyco_hydro_32_N"/>
</dbReference>
<dbReference type="InterPro" id="IPR023296">
    <property type="entry name" value="Glyco_hydro_beta-prop_sf"/>
</dbReference>
<dbReference type="PANTHER" id="PTHR31953">
    <property type="entry name" value="BETA-FRUCTOFURANOSIDASE, INSOLUBLE ISOENZYME CWINV1-RELATED"/>
    <property type="match status" value="1"/>
</dbReference>
<dbReference type="Pfam" id="PF08244">
    <property type="entry name" value="Glyco_hydro_32C"/>
    <property type="match status" value="1"/>
</dbReference>
<dbReference type="Pfam" id="PF00251">
    <property type="entry name" value="Glyco_hydro_32N"/>
    <property type="match status" value="1"/>
</dbReference>
<dbReference type="SMART" id="SM00640">
    <property type="entry name" value="Glyco_32"/>
    <property type="match status" value="1"/>
</dbReference>
<dbReference type="SUPFAM" id="SSF75005">
    <property type="entry name" value="Arabinanase/levansucrase/invertase"/>
    <property type="match status" value="1"/>
</dbReference>
<dbReference type="SUPFAM" id="SSF49899">
    <property type="entry name" value="Concanavalin A-like lectins/glucanases"/>
    <property type="match status" value="1"/>
</dbReference>